<reference key="1">
    <citation type="journal article" date="2008" name="PLoS ONE">
        <title>Survival in nuclear waste, extreme resistance, and potential applications gleaned from the genome sequence of Kineococcus radiotolerans SRS30216.</title>
        <authorList>
            <person name="Bagwell C.E."/>
            <person name="Bhat S."/>
            <person name="Hawkins G.M."/>
            <person name="Smith B.W."/>
            <person name="Biswas T."/>
            <person name="Hoover T.R."/>
            <person name="Saunders E."/>
            <person name="Han C.S."/>
            <person name="Tsodikov O.V."/>
            <person name="Shimkets L.J."/>
        </authorList>
    </citation>
    <scope>NUCLEOTIDE SEQUENCE [LARGE SCALE GENOMIC DNA]</scope>
    <source>
        <strain>ATCC BAA-149 / DSM 14245 / SRS30216</strain>
    </source>
</reference>
<gene>
    <name evidence="1" type="primary">tsf</name>
    <name type="ordered locus">Krad_1416</name>
</gene>
<sequence length="275" mass="29343">MAAYTAADVKALREKTGAGMLDCKNALVESEGDVEKAIELLRIKGQKGVAKREDRDASNGLVAVHTDGGLGVMVQLNCETDFVAKSEGFIALSQQVLDQAVAVAATDAESLLASDLGGRTVQELLDEANATMGEKILVPRVARIEGTHVSAYLHRTATDLPPTIGVLVALDAVNDEIGKDVAMHTAAMSPTYLTREDVPAEKVESERRIAEETAREENKPEAAMAKIVEGRVNSYFKDNVLLEQPFAKDPKTTITKLLAGAGVHVTSFARFRAGA</sequence>
<keyword id="KW-0963">Cytoplasm</keyword>
<keyword id="KW-0251">Elongation factor</keyword>
<keyword id="KW-0648">Protein biosynthesis</keyword>
<keyword id="KW-1185">Reference proteome</keyword>
<evidence type="ECO:0000255" key="1">
    <source>
        <dbReference type="HAMAP-Rule" id="MF_00050"/>
    </source>
</evidence>
<proteinExistence type="inferred from homology"/>
<accession>A6W7W5</accession>
<dbReference type="EMBL" id="CP000750">
    <property type="protein sequence ID" value="ABS02904.1"/>
    <property type="molecule type" value="Genomic_DNA"/>
</dbReference>
<dbReference type="RefSeq" id="WP_011981957.1">
    <property type="nucleotide sequence ID" value="NC_009664.2"/>
</dbReference>
<dbReference type="SMR" id="A6W7W5"/>
<dbReference type="STRING" id="266940.Krad_1416"/>
<dbReference type="KEGG" id="kra:Krad_1416"/>
<dbReference type="eggNOG" id="COG0264">
    <property type="taxonomic scope" value="Bacteria"/>
</dbReference>
<dbReference type="HOGENOM" id="CLU_047155_0_0_11"/>
<dbReference type="OrthoDB" id="9808348at2"/>
<dbReference type="Proteomes" id="UP000001116">
    <property type="component" value="Chromosome"/>
</dbReference>
<dbReference type="GO" id="GO:0005737">
    <property type="term" value="C:cytoplasm"/>
    <property type="evidence" value="ECO:0007669"/>
    <property type="project" value="UniProtKB-SubCell"/>
</dbReference>
<dbReference type="GO" id="GO:0003746">
    <property type="term" value="F:translation elongation factor activity"/>
    <property type="evidence" value="ECO:0007669"/>
    <property type="project" value="UniProtKB-UniRule"/>
</dbReference>
<dbReference type="CDD" id="cd14275">
    <property type="entry name" value="UBA_EF-Ts"/>
    <property type="match status" value="1"/>
</dbReference>
<dbReference type="FunFam" id="1.10.286.20:FF:000001">
    <property type="entry name" value="Elongation factor Ts"/>
    <property type="match status" value="1"/>
</dbReference>
<dbReference type="FunFam" id="1.10.8.10:FF:000001">
    <property type="entry name" value="Elongation factor Ts"/>
    <property type="match status" value="1"/>
</dbReference>
<dbReference type="Gene3D" id="1.10.286.20">
    <property type="match status" value="1"/>
</dbReference>
<dbReference type="Gene3D" id="1.10.8.10">
    <property type="entry name" value="DNA helicase RuvA subunit, C-terminal domain"/>
    <property type="match status" value="1"/>
</dbReference>
<dbReference type="Gene3D" id="3.30.479.20">
    <property type="entry name" value="Elongation factor Ts, dimerisation domain"/>
    <property type="match status" value="2"/>
</dbReference>
<dbReference type="HAMAP" id="MF_00050">
    <property type="entry name" value="EF_Ts"/>
    <property type="match status" value="1"/>
</dbReference>
<dbReference type="InterPro" id="IPR036402">
    <property type="entry name" value="EF-Ts_dimer_sf"/>
</dbReference>
<dbReference type="InterPro" id="IPR001816">
    <property type="entry name" value="Transl_elong_EFTs/EF1B"/>
</dbReference>
<dbReference type="InterPro" id="IPR014039">
    <property type="entry name" value="Transl_elong_EFTs/EF1B_dimer"/>
</dbReference>
<dbReference type="InterPro" id="IPR018101">
    <property type="entry name" value="Transl_elong_Ts_CS"/>
</dbReference>
<dbReference type="InterPro" id="IPR009060">
    <property type="entry name" value="UBA-like_sf"/>
</dbReference>
<dbReference type="NCBIfam" id="TIGR00116">
    <property type="entry name" value="tsf"/>
    <property type="match status" value="1"/>
</dbReference>
<dbReference type="PANTHER" id="PTHR11741">
    <property type="entry name" value="ELONGATION FACTOR TS"/>
    <property type="match status" value="1"/>
</dbReference>
<dbReference type="PANTHER" id="PTHR11741:SF0">
    <property type="entry name" value="ELONGATION FACTOR TS, MITOCHONDRIAL"/>
    <property type="match status" value="1"/>
</dbReference>
<dbReference type="Pfam" id="PF00889">
    <property type="entry name" value="EF_TS"/>
    <property type="match status" value="1"/>
</dbReference>
<dbReference type="SUPFAM" id="SSF54713">
    <property type="entry name" value="Elongation factor Ts (EF-Ts), dimerisation domain"/>
    <property type="match status" value="1"/>
</dbReference>
<dbReference type="SUPFAM" id="SSF46934">
    <property type="entry name" value="UBA-like"/>
    <property type="match status" value="1"/>
</dbReference>
<dbReference type="PROSITE" id="PS01126">
    <property type="entry name" value="EF_TS_1"/>
    <property type="match status" value="1"/>
</dbReference>
<name>EFTS_KINRD</name>
<feature type="chain" id="PRO_1000074867" description="Elongation factor Ts">
    <location>
        <begin position="1"/>
        <end position="275"/>
    </location>
</feature>
<feature type="region of interest" description="Involved in Mg(2+) ion dislocation from EF-Tu" evidence="1">
    <location>
        <begin position="80"/>
        <end position="83"/>
    </location>
</feature>
<comment type="function">
    <text evidence="1">Associates with the EF-Tu.GDP complex and induces the exchange of GDP to GTP. It remains bound to the aminoacyl-tRNA.EF-Tu.GTP complex up to the GTP hydrolysis stage on the ribosome.</text>
</comment>
<comment type="subcellular location">
    <subcellularLocation>
        <location evidence="1">Cytoplasm</location>
    </subcellularLocation>
</comment>
<comment type="similarity">
    <text evidence="1">Belongs to the EF-Ts family.</text>
</comment>
<organism>
    <name type="scientific">Kineococcus radiotolerans (strain ATCC BAA-149 / DSM 14245 / SRS30216)</name>
    <dbReference type="NCBI Taxonomy" id="266940"/>
    <lineage>
        <taxon>Bacteria</taxon>
        <taxon>Bacillati</taxon>
        <taxon>Actinomycetota</taxon>
        <taxon>Actinomycetes</taxon>
        <taxon>Kineosporiales</taxon>
        <taxon>Kineosporiaceae</taxon>
        <taxon>Kineococcus</taxon>
    </lineage>
</organism>
<protein>
    <recommendedName>
        <fullName evidence="1">Elongation factor Ts</fullName>
        <shortName evidence="1">EF-Ts</shortName>
    </recommendedName>
</protein>